<organism>
    <name type="scientific">Pseudarthrobacter chlorophenolicus (strain ATCC 700700 / DSM 12829 / CIP 107037 / JCM 12360 / KCTC 9906 / NCIMB 13794 / A6)</name>
    <name type="common">Arthrobacter chlorophenolicus</name>
    <dbReference type="NCBI Taxonomy" id="452863"/>
    <lineage>
        <taxon>Bacteria</taxon>
        <taxon>Bacillati</taxon>
        <taxon>Actinomycetota</taxon>
        <taxon>Actinomycetes</taxon>
        <taxon>Micrococcales</taxon>
        <taxon>Micrococcaceae</taxon>
        <taxon>Pseudarthrobacter</taxon>
    </lineage>
</organism>
<accession>B8HAZ0</accession>
<comment type="function">
    <text evidence="1">Produces ATP from ADP in the presence of a proton gradient across the membrane. The gamma chain is believed to be important in regulating ATPase activity and the flow of protons through the CF(0) complex.</text>
</comment>
<comment type="subunit">
    <text evidence="1">F-type ATPases have 2 components, CF(1) - the catalytic core - and CF(0) - the membrane proton channel. CF(1) has five subunits: alpha(3), beta(3), gamma(1), delta(1), epsilon(1). CF(0) has three main subunits: a, b and c.</text>
</comment>
<comment type="subcellular location">
    <subcellularLocation>
        <location evidence="1">Cell membrane</location>
        <topology evidence="1">Peripheral membrane protein</topology>
    </subcellularLocation>
</comment>
<comment type="similarity">
    <text evidence="1">Belongs to the ATPase gamma chain family.</text>
</comment>
<dbReference type="EMBL" id="CP001341">
    <property type="protein sequence ID" value="ACL40304.1"/>
    <property type="molecule type" value="Genomic_DNA"/>
</dbReference>
<dbReference type="RefSeq" id="WP_015937517.1">
    <property type="nucleotide sequence ID" value="NC_011886.1"/>
</dbReference>
<dbReference type="SMR" id="B8HAZ0"/>
<dbReference type="STRING" id="452863.Achl_2339"/>
<dbReference type="KEGG" id="ach:Achl_2339"/>
<dbReference type="eggNOG" id="COG0224">
    <property type="taxonomic scope" value="Bacteria"/>
</dbReference>
<dbReference type="HOGENOM" id="CLU_050669_0_0_11"/>
<dbReference type="OrthoDB" id="9812769at2"/>
<dbReference type="Proteomes" id="UP000002505">
    <property type="component" value="Chromosome"/>
</dbReference>
<dbReference type="GO" id="GO:0005886">
    <property type="term" value="C:plasma membrane"/>
    <property type="evidence" value="ECO:0007669"/>
    <property type="project" value="UniProtKB-SubCell"/>
</dbReference>
<dbReference type="GO" id="GO:0045259">
    <property type="term" value="C:proton-transporting ATP synthase complex"/>
    <property type="evidence" value="ECO:0007669"/>
    <property type="project" value="UniProtKB-KW"/>
</dbReference>
<dbReference type="GO" id="GO:0005524">
    <property type="term" value="F:ATP binding"/>
    <property type="evidence" value="ECO:0007669"/>
    <property type="project" value="UniProtKB-UniRule"/>
</dbReference>
<dbReference type="GO" id="GO:0046933">
    <property type="term" value="F:proton-transporting ATP synthase activity, rotational mechanism"/>
    <property type="evidence" value="ECO:0007669"/>
    <property type="project" value="UniProtKB-UniRule"/>
</dbReference>
<dbReference type="GO" id="GO:0042777">
    <property type="term" value="P:proton motive force-driven plasma membrane ATP synthesis"/>
    <property type="evidence" value="ECO:0007669"/>
    <property type="project" value="UniProtKB-UniRule"/>
</dbReference>
<dbReference type="CDD" id="cd12151">
    <property type="entry name" value="F1-ATPase_gamma"/>
    <property type="match status" value="1"/>
</dbReference>
<dbReference type="Gene3D" id="3.40.1380.10">
    <property type="match status" value="1"/>
</dbReference>
<dbReference type="Gene3D" id="1.10.287.80">
    <property type="entry name" value="ATP synthase, gamma subunit, helix hairpin domain"/>
    <property type="match status" value="1"/>
</dbReference>
<dbReference type="HAMAP" id="MF_00815">
    <property type="entry name" value="ATP_synth_gamma_bact"/>
    <property type="match status" value="1"/>
</dbReference>
<dbReference type="InterPro" id="IPR035968">
    <property type="entry name" value="ATP_synth_F1_ATPase_gsu"/>
</dbReference>
<dbReference type="InterPro" id="IPR000131">
    <property type="entry name" value="ATP_synth_F1_gsu"/>
</dbReference>
<dbReference type="InterPro" id="IPR023632">
    <property type="entry name" value="ATP_synth_F1_gsu_CS"/>
</dbReference>
<dbReference type="NCBIfam" id="TIGR01146">
    <property type="entry name" value="ATPsyn_F1gamma"/>
    <property type="match status" value="1"/>
</dbReference>
<dbReference type="NCBIfam" id="NF004145">
    <property type="entry name" value="PRK05621.1-2"/>
    <property type="match status" value="1"/>
</dbReference>
<dbReference type="PANTHER" id="PTHR11693">
    <property type="entry name" value="ATP SYNTHASE GAMMA CHAIN"/>
    <property type="match status" value="1"/>
</dbReference>
<dbReference type="PANTHER" id="PTHR11693:SF22">
    <property type="entry name" value="ATP SYNTHASE SUBUNIT GAMMA, MITOCHONDRIAL"/>
    <property type="match status" value="1"/>
</dbReference>
<dbReference type="Pfam" id="PF00231">
    <property type="entry name" value="ATP-synt"/>
    <property type="match status" value="1"/>
</dbReference>
<dbReference type="PRINTS" id="PR00126">
    <property type="entry name" value="ATPASEGAMMA"/>
</dbReference>
<dbReference type="SUPFAM" id="SSF52943">
    <property type="entry name" value="ATP synthase (F1-ATPase), gamma subunit"/>
    <property type="match status" value="1"/>
</dbReference>
<dbReference type="PROSITE" id="PS00153">
    <property type="entry name" value="ATPASE_GAMMA"/>
    <property type="match status" value="1"/>
</dbReference>
<evidence type="ECO:0000255" key="1">
    <source>
        <dbReference type="HAMAP-Rule" id="MF_00815"/>
    </source>
</evidence>
<feature type="chain" id="PRO_1000148597" description="ATP synthase gamma chain">
    <location>
        <begin position="1"/>
        <end position="296"/>
    </location>
</feature>
<gene>
    <name evidence="1" type="primary">atpG</name>
    <name type="ordered locus">Achl_2339</name>
</gene>
<reference key="1">
    <citation type="submission" date="2009-01" db="EMBL/GenBank/DDBJ databases">
        <title>Complete sequence of chromosome of Arthrobacter chlorophenolicus A6.</title>
        <authorList>
            <consortium name="US DOE Joint Genome Institute"/>
            <person name="Lucas S."/>
            <person name="Copeland A."/>
            <person name="Lapidus A."/>
            <person name="Glavina del Rio T."/>
            <person name="Tice H."/>
            <person name="Bruce D."/>
            <person name="Goodwin L."/>
            <person name="Pitluck S."/>
            <person name="Goltsman E."/>
            <person name="Clum A."/>
            <person name="Larimer F."/>
            <person name="Land M."/>
            <person name="Hauser L."/>
            <person name="Kyrpides N."/>
            <person name="Mikhailova N."/>
            <person name="Jansson J."/>
            <person name="Richardson P."/>
        </authorList>
    </citation>
    <scope>NUCLEOTIDE SEQUENCE [LARGE SCALE GENOMIC DNA]</scope>
    <source>
        <strain>ATCC 700700 / DSM 12829 / CIP 107037 / JCM 12360 / KCTC 9906 / NCIMB 13794 / A6</strain>
    </source>
</reference>
<keyword id="KW-0066">ATP synthesis</keyword>
<keyword id="KW-1003">Cell membrane</keyword>
<keyword id="KW-0139">CF(1)</keyword>
<keyword id="KW-0375">Hydrogen ion transport</keyword>
<keyword id="KW-0406">Ion transport</keyword>
<keyword id="KW-0472">Membrane</keyword>
<keyword id="KW-0813">Transport</keyword>
<proteinExistence type="inferred from homology"/>
<name>ATPG_PSECP</name>
<sequence length="296" mass="32477">MGAQIRVYRQKISSTTSMRKIFKAMELIATSRIGKARARVAASLPYANAITRAVSAVASQSEIDHPLTTEPEQIRRAAVLVITSDRGLAGSYSASVLKQAEGLNELLHAEGKEVKTYLVGRKSQAYFDFRNREYARVWTGGTDAPEFGTAREIGAALLADFAADFEDGGVDEIHVVYTRFKSMVTQEPTVIRLLPLEVVEEEAASESDLLPLYEFEPETEQVLDALLPRYIESRLFAAMLQAAASELAARQRAMKSAGDNATDLIKKYTRLRNTARQAEITQELSEIVAGADALAS</sequence>
<protein>
    <recommendedName>
        <fullName evidence="1">ATP synthase gamma chain</fullName>
    </recommendedName>
    <alternativeName>
        <fullName evidence="1">ATP synthase F1 sector gamma subunit</fullName>
    </alternativeName>
    <alternativeName>
        <fullName evidence="1">F-ATPase gamma subunit</fullName>
    </alternativeName>
</protein>